<feature type="chain" id="PRO_0000335716" description="4-diphosphocytidyl-2-C-methyl-D-erythritol kinase">
    <location>
        <begin position="1"/>
        <end position="302"/>
    </location>
</feature>
<feature type="active site" evidence="1">
    <location>
        <position position="13"/>
    </location>
</feature>
<feature type="active site" evidence="1">
    <location>
        <position position="143"/>
    </location>
</feature>
<feature type="binding site" evidence="1">
    <location>
        <begin position="101"/>
        <end position="111"/>
    </location>
    <ligand>
        <name>ATP</name>
        <dbReference type="ChEBI" id="CHEBI:30616"/>
    </ligand>
</feature>
<dbReference type="EC" id="2.7.1.148" evidence="1"/>
<dbReference type="EMBL" id="CP000394">
    <property type="protein sequence ID" value="ABI62746.1"/>
    <property type="molecule type" value="Genomic_DNA"/>
</dbReference>
<dbReference type="RefSeq" id="WP_011632548.1">
    <property type="nucleotide sequence ID" value="NC_008343.2"/>
</dbReference>
<dbReference type="SMR" id="Q0BR06"/>
<dbReference type="STRING" id="391165.GbCGDNIH1_1848"/>
<dbReference type="KEGG" id="gbe:GbCGDNIH1_1848"/>
<dbReference type="eggNOG" id="COG1947">
    <property type="taxonomic scope" value="Bacteria"/>
</dbReference>
<dbReference type="HOGENOM" id="CLU_053057_1_0_5"/>
<dbReference type="OrthoDB" id="9809438at2"/>
<dbReference type="UniPathway" id="UPA00056">
    <property type="reaction ID" value="UER00094"/>
</dbReference>
<dbReference type="Proteomes" id="UP000001963">
    <property type="component" value="Chromosome"/>
</dbReference>
<dbReference type="GO" id="GO:0050515">
    <property type="term" value="F:4-(cytidine 5'-diphospho)-2-C-methyl-D-erythritol kinase activity"/>
    <property type="evidence" value="ECO:0007669"/>
    <property type="project" value="UniProtKB-UniRule"/>
</dbReference>
<dbReference type="GO" id="GO:0005524">
    <property type="term" value="F:ATP binding"/>
    <property type="evidence" value="ECO:0007669"/>
    <property type="project" value="UniProtKB-UniRule"/>
</dbReference>
<dbReference type="GO" id="GO:0019288">
    <property type="term" value="P:isopentenyl diphosphate biosynthetic process, methylerythritol 4-phosphate pathway"/>
    <property type="evidence" value="ECO:0007669"/>
    <property type="project" value="UniProtKB-UniRule"/>
</dbReference>
<dbReference type="GO" id="GO:0016114">
    <property type="term" value="P:terpenoid biosynthetic process"/>
    <property type="evidence" value="ECO:0007669"/>
    <property type="project" value="InterPro"/>
</dbReference>
<dbReference type="Gene3D" id="3.30.230.10">
    <property type="match status" value="1"/>
</dbReference>
<dbReference type="Gene3D" id="3.30.70.890">
    <property type="entry name" value="GHMP kinase, C-terminal domain"/>
    <property type="match status" value="1"/>
</dbReference>
<dbReference type="HAMAP" id="MF_00061">
    <property type="entry name" value="IspE"/>
    <property type="match status" value="1"/>
</dbReference>
<dbReference type="InterPro" id="IPR013750">
    <property type="entry name" value="GHMP_kinase_C_dom"/>
</dbReference>
<dbReference type="InterPro" id="IPR036554">
    <property type="entry name" value="GHMP_kinase_C_sf"/>
</dbReference>
<dbReference type="InterPro" id="IPR006204">
    <property type="entry name" value="GHMP_kinase_N_dom"/>
</dbReference>
<dbReference type="InterPro" id="IPR004424">
    <property type="entry name" value="IspE"/>
</dbReference>
<dbReference type="InterPro" id="IPR020568">
    <property type="entry name" value="Ribosomal_Su5_D2-typ_SF"/>
</dbReference>
<dbReference type="InterPro" id="IPR014721">
    <property type="entry name" value="Ribsml_uS5_D2-typ_fold_subgr"/>
</dbReference>
<dbReference type="NCBIfam" id="TIGR00154">
    <property type="entry name" value="ispE"/>
    <property type="match status" value="1"/>
</dbReference>
<dbReference type="NCBIfam" id="NF011202">
    <property type="entry name" value="PRK14608.1"/>
    <property type="match status" value="1"/>
</dbReference>
<dbReference type="PANTHER" id="PTHR43527">
    <property type="entry name" value="4-DIPHOSPHOCYTIDYL-2-C-METHYL-D-ERYTHRITOL KINASE, CHLOROPLASTIC"/>
    <property type="match status" value="1"/>
</dbReference>
<dbReference type="PANTHER" id="PTHR43527:SF2">
    <property type="entry name" value="4-DIPHOSPHOCYTIDYL-2-C-METHYL-D-ERYTHRITOL KINASE, CHLOROPLASTIC"/>
    <property type="match status" value="1"/>
</dbReference>
<dbReference type="Pfam" id="PF08544">
    <property type="entry name" value="GHMP_kinases_C"/>
    <property type="match status" value="1"/>
</dbReference>
<dbReference type="Pfam" id="PF00288">
    <property type="entry name" value="GHMP_kinases_N"/>
    <property type="match status" value="1"/>
</dbReference>
<dbReference type="PIRSF" id="PIRSF010376">
    <property type="entry name" value="IspE"/>
    <property type="match status" value="1"/>
</dbReference>
<dbReference type="SUPFAM" id="SSF55060">
    <property type="entry name" value="GHMP Kinase, C-terminal domain"/>
    <property type="match status" value="1"/>
</dbReference>
<dbReference type="SUPFAM" id="SSF54211">
    <property type="entry name" value="Ribosomal protein S5 domain 2-like"/>
    <property type="match status" value="1"/>
</dbReference>
<gene>
    <name evidence="1" type="primary">ispE</name>
    <name type="ordered locus">GbCGDNIH1_1848</name>
</gene>
<sequence length="302" mass="31914">MIVDQNVAFAPAKINLYLHVTGRRSDGYHLLDSLAVFAEACDVLRYRDGDQAAGLGLQLEGPGAETLRAEPDNLVLRAGRALAALAGIKPRGTIMLDKRLPVASGIGGGSSDAAAALRLLSRVWGVSPAAEDLHRIATSLGADVPVCLEPGTYRMRGIGERLEALPAMPEIGLLLANPGVPVSTPEVFRNREHGFTPEATLASRWPDMAALLRDLQLSRNDLQPPAMRLCPAIGILLHALEGLPGARLTRMSGSGATCFTLFDHPDAARDAAQLLQAQSGMGGWCWGGGLYKTASALDKTTL</sequence>
<protein>
    <recommendedName>
        <fullName evidence="1">4-diphosphocytidyl-2-C-methyl-D-erythritol kinase</fullName>
        <shortName evidence="1">CMK</shortName>
        <ecNumber evidence="1">2.7.1.148</ecNumber>
    </recommendedName>
    <alternativeName>
        <fullName evidence="1">4-(cytidine-5'-diphospho)-2-C-methyl-D-erythritol kinase</fullName>
    </alternativeName>
</protein>
<comment type="function">
    <text evidence="1">Catalyzes the phosphorylation of the position 2 hydroxy group of 4-diphosphocytidyl-2C-methyl-D-erythritol.</text>
</comment>
<comment type="catalytic activity">
    <reaction evidence="1">
        <text>4-CDP-2-C-methyl-D-erythritol + ATP = 4-CDP-2-C-methyl-D-erythritol 2-phosphate + ADP + H(+)</text>
        <dbReference type="Rhea" id="RHEA:18437"/>
        <dbReference type="ChEBI" id="CHEBI:15378"/>
        <dbReference type="ChEBI" id="CHEBI:30616"/>
        <dbReference type="ChEBI" id="CHEBI:57823"/>
        <dbReference type="ChEBI" id="CHEBI:57919"/>
        <dbReference type="ChEBI" id="CHEBI:456216"/>
        <dbReference type="EC" id="2.7.1.148"/>
    </reaction>
</comment>
<comment type="pathway">
    <text evidence="1">Isoprenoid biosynthesis; isopentenyl diphosphate biosynthesis via DXP pathway; isopentenyl diphosphate from 1-deoxy-D-xylulose 5-phosphate: step 3/6.</text>
</comment>
<comment type="similarity">
    <text evidence="1">Belongs to the GHMP kinase family. IspE subfamily.</text>
</comment>
<keyword id="KW-0067">ATP-binding</keyword>
<keyword id="KW-0414">Isoprene biosynthesis</keyword>
<keyword id="KW-0418">Kinase</keyword>
<keyword id="KW-0547">Nucleotide-binding</keyword>
<keyword id="KW-1185">Reference proteome</keyword>
<keyword id="KW-0808">Transferase</keyword>
<accession>Q0BR06</accession>
<name>ISPE_GRABC</name>
<organism>
    <name type="scientific">Granulibacter bethesdensis (strain ATCC BAA-1260 / CGDNIH1)</name>
    <dbReference type="NCBI Taxonomy" id="391165"/>
    <lineage>
        <taxon>Bacteria</taxon>
        <taxon>Pseudomonadati</taxon>
        <taxon>Pseudomonadota</taxon>
        <taxon>Alphaproteobacteria</taxon>
        <taxon>Acetobacterales</taxon>
        <taxon>Acetobacteraceae</taxon>
        <taxon>Granulibacter</taxon>
    </lineage>
</organism>
<reference key="1">
    <citation type="journal article" date="2007" name="J. Bacteriol.">
        <title>Genome sequence analysis of the emerging human pathogenic acetic acid bacterium Granulibacter bethesdensis.</title>
        <authorList>
            <person name="Greenberg D.E."/>
            <person name="Porcella S.F."/>
            <person name="Zelazny A.M."/>
            <person name="Virtaneva K."/>
            <person name="Sturdevant D.E."/>
            <person name="Kupko J.J. III"/>
            <person name="Barbian K.D."/>
            <person name="Babar A."/>
            <person name="Dorward D.W."/>
            <person name="Holland S.M."/>
        </authorList>
    </citation>
    <scope>NUCLEOTIDE SEQUENCE [LARGE SCALE GENOMIC DNA]</scope>
    <source>
        <strain>ATCC BAA-1260 / CGDNIH1</strain>
    </source>
</reference>
<proteinExistence type="inferred from homology"/>
<evidence type="ECO:0000255" key="1">
    <source>
        <dbReference type="HAMAP-Rule" id="MF_00061"/>
    </source>
</evidence>